<proteinExistence type="evidence at protein level"/>
<dbReference type="EC" id="1.14.19.17" evidence="4"/>
<dbReference type="EC" id="5.2.1.-" evidence="2"/>
<dbReference type="EMBL" id="Y08460">
    <property type="protein sequence ID" value="CAA69714.1"/>
    <property type="molecule type" value="mRNA"/>
</dbReference>
<dbReference type="EMBL" id="AF466376">
    <property type="protein sequence ID" value="AAM12532.1"/>
    <property type="molecule type" value="mRNA"/>
</dbReference>
<dbReference type="EMBL" id="AK002617">
    <property type="protein sequence ID" value="BAB22233.1"/>
    <property type="molecule type" value="mRNA"/>
</dbReference>
<dbReference type="EMBL" id="AK077257">
    <property type="protein sequence ID" value="BAC36713.1"/>
    <property type="molecule type" value="mRNA"/>
</dbReference>
<dbReference type="EMBL" id="AK149811">
    <property type="protein sequence ID" value="BAE29098.1"/>
    <property type="molecule type" value="mRNA"/>
</dbReference>
<dbReference type="EMBL" id="AK163404">
    <property type="protein sequence ID" value="BAE37337.1"/>
    <property type="molecule type" value="mRNA"/>
</dbReference>
<dbReference type="EMBL" id="BC003751">
    <property type="protein sequence ID" value="AAH03751.1"/>
    <property type="molecule type" value="mRNA"/>
</dbReference>
<dbReference type="CCDS" id="CCDS15587.1"/>
<dbReference type="RefSeq" id="NP_031879.1">
    <property type="nucleotide sequence ID" value="NM_007853.5"/>
</dbReference>
<dbReference type="BioGRID" id="199114">
    <property type="interactions" value="5"/>
</dbReference>
<dbReference type="FunCoup" id="O09005">
    <property type="interactions" value="2421"/>
</dbReference>
<dbReference type="IntAct" id="O09005">
    <property type="interactions" value="1"/>
</dbReference>
<dbReference type="STRING" id="10090.ENSMUSP00000048519"/>
<dbReference type="SwissLipids" id="SLP:000000167"/>
<dbReference type="iPTMnet" id="O09005"/>
<dbReference type="PhosphoSitePlus" id="O09005"/>
<dbReference type="SwissPalm" id="O09005"/>
<dbReference type="PaxDb" id="10090-ENSMUSP00000048519"/>
<dbReference type="PeptideAtlas" id="O09005"/>
<dbReference type="ProteomicsDB" id="279399"/>
<dbReference type="Pumba" id="O09005"/>
<dbReference type="DNASU" id="13244"/>
<dbReference type="Ensembl" id="ENSMUST00000035295.6">
    <property type="protein sequence ID" value="ENSMUSP00000048519.6"/>
    <property type="gene ID" value="ENSMUSG00000038633.6"/>
</dbReference>
<dbReference type="GeneID" id="13244"/>
<dbReference type="KEGG" id="mmu:13244"/>
<dbReference type="UCSC" id="uc007dxw.1">
    <property type="organism name" value="mouse"/>
</dbReference>
<dbReference type="AGR" id="MGI:1097711"/>
<dbReference type="CTD" id="8560"/>
<dbReference type="MGI" id="MGI:1097711">
    <property type="gene designation" value="Degs1"/>
</dbReference>
<dbReference type="VEuPathDB" id="HostDB:ENSMUSG00000038633"/>
<dbReference type="eggNOG" id="KOG2987">
    <property type="taxonomic scope" value="Eukaryota"/>
</dbReference>
<dbReference type="GeneTree" id="ENSGT00390000013448"/>
<dbReference type="InParanoid" id="O09005"/>
<dbReference type="OMA" id="GATCNQN"/>
<dbReference type="OrthoDB" id="200948at2759"/>
<dbReference type="PhylomeDB" id="O09005"/>
<dbReference type="TreeFam" id="TF313582"/>
<dbReference type="BRENDA" id="1.14.19.17">
    <property type="organism ID" value="3474"/>
</dbReference>
<dbReference type="Reactome" id="R-MMU-1660661">
    <property type="pathway name" value="Sphingolipid de novo biosynthesis"/>
</dbReference>
<dbReference type="Reactome" id="R-MMU-6798695">
    <property type="pathway name" value="Neutrophil degranulation"/>
</dbReference>
<dbReference type="BioGRID-ORCS" id="13244">
    <property type="hits" value="6 hits in 79 CRISPR screens"/>
</dbReference>
<dbReference type="ChiTaRS" id="Degs1">
    <property type="organism name" value="mouse"/>
</dbReference>
<dbReference type="PRO" id="PR:O09005"/>
<dbReference type="Proteomes" id="UP000000589">
    <property type="component" value="Chromosome 1"/>
</dbReference>
<dbReference type="RNAct" id="O09005">
    <property type="molecule type" value="protein"/>
</dbReference>
<dbReference type="Bgee" id="ENSMUSG00000038633">
    <property type="expression patterns" value="Expressed in tail skin and 264 other cell types or tissues"/>
</dbReference>
<dbReference type="ExpressionAtlas" id="O09005">
    <property type="expression patterns" value="baseline and differential"/>
</dbReference>
<dbReference type="GO" id="GO:0005789">
    <property type="term" value="C:endoplasmic reticulum membrane"/>
    <property type="evidence" value="ECO:0007669"/>
    <property type="project" value="UniProtKB-SubCell"/>
</dbReference>
<dbReference type="GO" id="GO:0031966">
    <property type="term" value="C:mitochondrial membrane"/>
    <property type="evidence" value="ECO:0007669"/>
    <property type="project" value="UniProtKB-SubCell"/>
</dbReference>
<dbReference type="GO" id="GO:0050251">
    <property type="term" value="F:retinol isomerase activity"/>
    <property type="evidence" value="ECO:0000314"/>
    <property type="project" value="UniProtKB"/>
</dbReference>
<dbReference type="GO" id="GO:0042284">
    <property type="term" value="F:sphingolipid delta-4 desaturase activity"/>
    <property type="evidence" value="ECO:0000315"/>
    <property type="project" value="MGI"/>
</dbReference>
<dbReference type="GO" id="GO:0046513">
    <property type="term" value="P:ceramide biosynthetic process"/>
    <property type="evidence" value="ECO:0000315"/>
    <property type="project" value="MGI"/>
</dbReference>
<dbReference type="GO" id="GO:0006633">
    <property type="term" value="P:fatty acid biosynthetic process"/>
    <property type="evidence" value="ECO:0007669"/>
    <property type="project" value="UniProtKB-KW"/>
</dbReference>
<dbReference type="GO" id="GO:0043217">
    <property type="term" value="P:myelin maintenance"/>
    <property type="evidence" value="ECO:0000250"/>
    <property type="project" value="UniProtKB"/>
</dbReference>
<dbReference type="GO" id="GO:0043065">
    <property type="term" value="P:positive regulation of apoptotic process"/>
    <property type="evidence" value="ECO:0000315"/>
    <property type="project" value="MGI"/>
</dbReference>
<dbReference type="CDD" id="cd03508">
    <property type="entry name" value="Delta4-sphingolipid-FADS-like"/>
    <property type="match status" value="1"/>
</dbReference>
<dbReference type="InterPro" id="IPR011388">
    <property type="entry name" value="DES1/DES2"/>
</dbReference>
<dbReference type="InterPro" id="IPR005804">
    <property type="entry name" value="FA_desaturase_dom"/>
</dbReference>
<dbReference type="InterPro" id="IPR013866">
    <property type="entry name" value="Sphingolipid_d4-desaturase_N"/>
</dbReference>
<dbReference type="PANTHER" id="PTHR12879">
    <property type="entry name" value="SPHINGOLIPID DELTA 4 DESATURASE/C-4 HYDROXYLASE PROTEIN DES2"/>
    <property type="match status" value="1"/>
</dbReference>
<dbReference type="PANTHER" id="PTHR12879:SF2">
    <property type="entry name" value="SPHINGOLIPID DELTA(4)-DESATURASE DES1"/>
    <property type="match status" value="1"/>
</dbReference>
<dbReference type="Pfam" id="PF00487">
    <property type="entry name" value="FA_desaturase"/>
    <property type="match status" value="1"/>
</dbReference>
<dbReference type="Pfam" id="PF08557">
    <property type="entry name" value="Lipid_DES"/>
    <property type="match status" value="1"/>
</dbReference>
<dbReference type="PIRSF" id="PIRSF017228">
    <property type="entry name" value="Sphnglp_dlt4_des"/>
    <property type="match status" value="1"/>
</dbReference>
<dbReference type="SMART" id="SM01269">
    <property type="entry name" value="Lipid_DES"/>
    <property type="match status" value="1"/>
</dbReference>
<protein>
    <recommendedName>
        <fullName evidence="7">Sphingolipid delta(4)-desaturase DES1</fullName>
        <ecNumber evidence="4">1.14.19.17</ecNumber>
    </recommendedName>
    <alternativeName>
        <fullName>Degenerative spermatocyte homolog 1</fullName>
    </alternativeName>
    <alternativeName>
        <fullName>Dihydroceramide desaturase-1</fullName>
    </alternativeName>
    <alternativeName>
        <fullName>Retinol isomerase</fullName>
        <ecNumber evidence="2">5.2.1.-</ecNumber>
    </alternativeName>
</protein>
<feature type="initiator methionine" description="Removed" evidence="1">
    <location>
        <position position="1"/>
    </location>
</feature>
<feature type="chain" id="PRO_0000312729" description="Sphingolipid delta(4)-desaturase DES1">
    <location>
        <begin position="2"/>
        <end position="323"/>
    </location>
</feature>
<feature type="transmembrane region" description="Helical" evidence="3">
    <location>
        <begin position="41"/>
        <end position="61"/>
    </location>
</feature>
<feature type="transmembrane region" description="Helical" evidence="3">
    <location>
        <begin position="68"/>
        <end position="88"/>
    </location>
</feature>
<feature type="transmembrane region" description="Helical" evidence="3">
    <location>
        <begin position="104"/>
        <end position="124"/>
    </location>
</feature>
<feature type="transmembrane region" description="Helical" evidence="3">
    <location>
        <begin position="152"/>
        <end position="172"/>
    </location>
</feature>
<feature type="transmembrane region" description="Helical" evidence="3">
    <location>
        <begin position="184"/>
        <end position="204"/>
    </location>
</feature>
<feature type="transmembrane region" description="Helical" evidence="3">
    <location>
        <begin position="209"/>
        <end position="229"/>
    </location>
</feature>
<feature type="short sequence motif" description="Histidine box-1" evidence="7">
    <location>
        <begin position="89"/>
        <end position="93"/>
    </location>
</feature>
<feature type="short sequence motif" description="Histidine box-2" evidence="7">
    <location>
        <begin position="128"/>
        <end position="132"/>
    </location>
</feature>
<feature type="short sequence motif" description="Histidine box-3" evidence="7">
    <location>
        <begin position="259"/>
        <end position="263"/>
    </location>
</feature>
<feature type="modified residue" description="Phosphoserine" evidence="1">
    <location>
        <position position="307"/>
    </location>
</feature>
<feature type="lipid moiety-binding region" description="N-myristoyl glycine" evidence="1">
    <location>
        <position position="2"/>
    </location>
</feature>
<feature type="sequence conflict" description="In Ref. 2; AAM12532." evidence="7" ref="2">
    <original>V</original>
    <variation>A</variation>
    <location>
        <position position="203"/>
    </location>
</feature>
<sequence>MGSRVSREEFEWVYTDQPHAARRKEILAKYPEIKSLMKPDHNLIWIVAMMLLVQLASFYLVKDLDWKWVIFWSYVFGSCLNHSMTLAIHEISHNFPFGHHKALWNRWFGMFANLSLGVPYSISFKRYHMDHHRYLGADKIDVDIPTDFEGWFFCTTFRKFVWVILQPLFYAFRPLFINPKPITYLEIINTVIQITFDIIIYYVFGVKSLVYMLAATLLGLGLHPISGHFIAEHYMFLKGHETYSYYGPLNLLTFNVGYHNEHHDFPNVPGKNLPMVRKIASEYYDDLPHYNSWIKVLYDFVTDDTISPYSRMKRPPKGNEILE</sequence>
<reference key="1">
    <citation type="journal article" date="1997" name="Dev. Growth Differ.">
        <title>Mdes, a mouse homolog of the Drosophila degenerative spermatocyte gene is expressed during mouse spermatogenesis.</title>
        <authorList>
            <person name="Endo K."/>
            <person name="Matsuda Y."/>
            <person name="Kobayashi S."/>
        </authorList>
    </citation>
    <scope>NUCLEOTIDE SEQUENCE [MRNA]</scope>
    <scope>TISSUE SPECIFICITY</scope>
    <source>
        <strain>ddY</strain>
        <tissue>Testis</tissue>
    </source>
</reference>
<reference key="2">
    <citation type="journal article" date="2002" name="J. Biol. Chem.">
        <title>Identification and characterization of a sphingolipid delta 4-desaturase family.</title>
        <authorList>
            <person name="Ternes P."/>
            <person name="Franke S."/>
            <person name="Zaehringer U."/>
            <person name="Sperling P."/>
            <person name="Heinz E."/>
        </authorList>
    </citation>
    <scope>NUCLEOTIDE SEQUENCE [MRNA]</scope>
    <scope>FUNCTION</scope>
    <scope>CATALYTIC ACTIVITY</scope>
    <source>
        <strain>C57BL/6J</strain>
        <tissue>Kidney</tissue>
    </source>
</reference>
<reference key="3">
    <citation type="journal article" date="2005" name="Science">
        <title>The transcriptional landscape of the mammalian genome.</title>
        <authorList>
            <person name="Carninci P."/>
            <person name="Kasukawa T."/>
            <person name="Katayama S."/>
            <person name="Gough J."/>
            <person name="Frith M.C."/>
            <person name="Maeda N."/>
            <person name="Oyama R."/>
            <person name="Ravasi T."/>
            <person name="Lenhard B."/>
            <person name="Wells C."/>
            <person name="Kodzius R."/>
            <person name="Shimokawa K."/>
            <person name="Bajic V.B."/>
            <person name="Brenner S.E."/>
            <person name="Batalov S."/>
            <person name="Forrest A.R."/>
            <person name="Zavolan M."/>
            <person name="Davis M.J."/>
            <person name="Wilming L.G."/>
            <person name="Aidinis V."/>
            <person name="Allen J.E."/>
            <person name="Ambesi-Impiombato A."/>
            <person name="Apweiler R."/>
            <person name="Aturaliya R.N."/>
            <person name="Bailey T.L."/>
            <person name="Bansal M."/>
            <person name="Baxter L."/>
            <person name="Beisel K.W."/>
            <person name="Bersano T."/>
            <person name="Bono H."/>
            <person name="Chalk A.M."/>
            <person name="Chiu K.P."/>
            <person name="Choudhary V."/>
            <person name="Christoffels A."/>
            <person name="Clutterbuck D.R."/>
            <person name="Crowe M.L."/>
            <person name="Dalla E."/>
            <person name="Dalrymple B.P."/>
            <person name="de Bono B."/>
            <person name="Della Gatta G."/>
            <person name="di Bernardo D."/>
            <person name="Down T."/>
            <person name="Engstrom P."/>
            <person name="Fagiolini M."/>
            <person name="Faulkner G."/>
            <person name="Fletcher C.F."/>
            <person name="Fukushima T."/>
            <person name="Furuno M."/>
            <person name="Futaki S."/>
            <person name="Gariboldi M."/>
            <person name="Georgii-Hemming P."/>
            <person name="Gingeras T.R."/>
            <person name="Gojobori T."/>
            <person name="Green R.E."/>
            <person name="Gustincich S."/>
            <person name="Harbers M."/>
            <person name="Hayashi Y."/>
            <person name="Hensch T.K."/>
            <person name="Hirokawa N."/>
            <person name="Hill D."/>
            <person name="Huminiecki L."/>
            <person name="Iacono M."/>
            <person name="Ikeo K."/>
            <person name="Iwama A."/>
            <person name="Ishikawa T."/>
            <person name="Jakt M."/>
            <person name="Kanapin A."/>
            <person name="Katoh M."/>
            <person name="Kawasawa Y."/>
            <person name="Kelso J."/>
            <person name="Kitamura H."/>
            <person name="Kitano H."/>
            <person name="Kollias G."/>
            <person name="Krishnan S.P."/>
            <person name="Kruger A."/>
            <person name="Kummerfeld S.K."/>
            <person name="Kurochkin I.V."/>
            <person name="Lareau L.F."/>
            <person name="Lazarevic D."/>
            <person name="Lipovich L."/>
            <person name="Liu J."/>
            <person name="Liuni S."/>
            <person name="McWilliam S."/>
            <person name="Madan Babu M."/>
            <person name="Madera M."/>
            <person name="Marchionni L."/>
            <person name="Matsuda H."/>
            <person name="Matsuzawa S."/>
            <person name="Miki H."/>
            <person name="Mignone F."/>
            <person name="Miyake S."/>
            <person name="Morris K."/>
            <person name="Mottagui-Tabar S."/>
            <person name="Mulder N."/>
            <person name="Nakano N."/>
            <person name="Nakauchi H."/>
            <person name="Ng P."/>
            <person name="Nilsson R."/>
            <person name="Nishiguchi S."/>
            <person name="Nishikawa S."/>
            <person name="Nori F."/>
            <person name="Ohara O."/>
            <person name="Okazaki Y."/>
            <person name="Orlando V."/>
            <person name="Pang K.C."/>
            <person name="Pavan W.J."/>
            <person name="Pavesi G."/>
            <person name="Pesole G."/>
            <person name="Petrovsky N."/>
            <person name="Piazza S."/>
            <person name="Reed J."/>
            <person name="Reid J.F."/>
            <person name="Ring B.Z."/>
            <person name="Ringwald M."/>
            <person name="Rost B."/>
            <person name="Ruan Y."/>
            <person name="Salzberg S.L."/>
            <person name="Sandelin A."/>
            <person name="Schneider C."/>
            <person name="Schoenbach C."/>
            <person name="Sekiguchi K."/>
            <person name="Semple C.A."/>
            <person name="Seno S."/>
            <person name="Sessa L."/>
            <person name="Sheng Y."/>
            <person name="Shibata Y."/>
            <person name="Shimada H."/>
            <person name="Shimada K."/>
            <person name="Silva D."/>
            <person name="Sinclair B."/>
            <person name="Sperling S."/>
            <person name="Stupka E."/>
            <person name="Sugiura K."/>
            <person name="Sultana R."/>
            <person name="Takenaka Y."/>
            <person name="Taki K."/>
            <person name="Tammoja K."/>
            <person name="Tan S.L."/>
            <person name="Tang S."/>
            <person name="Taylor M.S."/>
            <person name="Tegner J."/>
            <person name="Teichmann S.A."/>
            <person name="Ueda H.R."/>
            <person name="van Nimwegen E."/>
            <person name="Verardo R."/>
            <person name="Wei C.L."/>
            <person name="Yagi K."/>
            <person name="Yamanishi H."/>
            <person name="Zabarovsky E."/>
            <person name="Zhu S."/>
            <person name="Zimmer A."/>
            <person name="Hide W."/>
            <person name="Bult C."/>
            <person name="Grimmond S.M."/>
            <person name="Teasdale R.D."/>
            <person name="Liu E.T."/>
            <person name="Brusic V."/>
            <person name="Quackenbush J."/>
            <person name="Wahlestedt C."/>
            <person name="Mattick J.S."/>
            <person name="Hume D.A."/>
            <person name="Kai C."/>
            <person name="Sasaki D."/>
            <person name="Tomaru Y."/>
            <person name="Fukuda S."/>
            <person name="Kanamori-Katayama M."/>
            <person name="Suzuki M."/>
            <person name="Aoki J."/>
            <person name="Arakawa T."/>
            <person name="Iida J."/>
            <person name="Imamura K."/>
            <person name="Itoh M."/>
            <person name="Kato T."/>
            <person name="Kawaji H."/>
            <person name="Kawagashira N."/>
            <person name="Kawashima T."/>
            <person name="Kojima M."/>
            <person name="Kondo S."/>
            <person name="Konno H."/>
            <person name="Nakano K."/>
            <person name="Ninomiya N."/>
            <person name="Nishio T."/>
            <person name="Okada M."/>
            <person name="Plessy C."/>
            <person name="Shibata K."/>
            <person name="Shiraki T."/>
            <person name="Suzuki S."/>
            <person name="Tagami M."/>
            <person name="Waki K."/>
            <person name="Watahiki A."/>
            <person name="Okamura-Oho Y."/>
            <person name="Suzuki H."/>
            <person name="Kawai J."/>
            <person name="Hayashizaki Y."/>
        </authorList>
    </citation>
    <scope>NUCLEOTIDE SEQUENCE [LARGE SCALE MRNA]</scope>
    <source>
        <strain>C57BL/6J</strain>
        <tissue>Bone marrow macrophage</tissue>
        <tissue>Egg</tissue>
        <tissue>Kidney</tissue>
        <tissue>Ovary</tissue>
        <tissue>Uterus</tissue>
    </source>
</reference>
<reference key="4">
    <citation type="journal article" date="2004" name="Genome Res.">
        <title>The status, quality, and expansion of the NIH full-length cDNA project: the Mammalian Gene Collection (MGC).</title>
        <authorList>
            <consortium name="The MGC Project Team"/>
        </authorList>
    </citation>
    <scope>NUCLEOTIDE SEQUENCE [LARGE SCALE MRNA]</scope>
    <source>
        <strain>FVB/N</strain>
        <tissue>Mammary tumor</tissue>
    </source>
</reference>
<reference key="5">
    <citation type="journal article" date="2010" name="Cell">
        <title>A tissue-specific atlas of mouse protein phosphorylation and expression.</title>
        <authorList>
            <person name="Huttlin E.L."/>
            <person name="Jedrychowski M.P."/>
            <person name="Elias J.E."/>
            <person name="Goswami T."/>
            <person name="Rad R."/>
            <person name="Beausoleil S.A."/>
            <person name="Villen J."/>
            <person name="Haas W."/>
            <person name="Sowa M.E."/>
            <person name="Gygi S.P."/>
        </authorList>
    </citation>
    <scope>IDENTIFICATION BY MASS SPECTROMETRY [LARGE SCALE ANALYSIS]</scope>
    <source>
        <tissue>Kidney</tissue>
        <tissue>Lung</tissue>
        <tissue>Pancreas</tissue>
        <tissue>Spleen</tissue>
        <tissue>Testis</tissue>
    </source>
</reference>
<reference key="6">
    <citation type="journal article" date="2013" name="Nat. Chem. Biol.">
        <title>Identification of DES1 as a vitamin A isomerase in Mueller glial cells of the retina.</title>
        <authorList>
            <person name="Kaylor J.J."/>
            <person name="Yuan Q."/>
            <person name="Cook J."/>
            <person name="Sarfare S."/>
            <person name="Makshanoff J."/>
            <person name="Miu A."/>
            <person name="Kim A."/>
            <person name="Kim P."/>
            <person name="Habib S."/>
            <person name="Roybal C.N."/>
            <person name="Xu T."/>
            <person name="Nusinowitz S."/>
            <person name="Travis G.H."/>
        </authorList>
    </citation>
    <scope>TISSUE SPECIFICITY</scope>
    <scope>CATALYTIC ACTIVITY</scope>
</reference>
<comment type="function">
    <text evidence="2 4">Has sphingolipid-delta-4-desaturase activity. Converts D-erythro-sphinganine to D-erythro-sphingosine (E-sphing-4-enine). Catalyzes the equilibrium isomerization of retinols (By similarity).</text>
</comment>
<comment type="catalytic activity">
    <reaction evidence="4">
        <text>an N-acylsphinganine + 2 Fe(II)-[cytochrome b5] + O2 + 2 H(+) = an N-acylsphing-4-enine + 2 Fe(III)-[cytochrome b5] + 2 H2O</text>
        <dbReference type="Rhea" id="RHEA:46544"/>
        <dbReference type="Rhea" id="RHEA-COMP:10438"/>
        <dbReference type="Rhea" id="RHEA-COMP:10439"/>
        <dbReference type="ChEBI" id="CHEBI:15377"/>
        <dbReference type="ChEBI" id="CHEBI:15378"/>
        <dbReference type="ChEBI" id="CHEBI:15379"/>
        <dbReference type="ChEBI" id="CHEBI:29033"/>
        <dbReference type="ChEBI" id="CHEBI:29034"/>
        <dbReference type="ChEBI" id="CHEBI:31488"/>
        <dbReference type="ChEBI" id="CHEBI:52639"/>
        <dbReference type="EC" id="1.14.19.17"/>
    </reaction>
    <physiologicalReaction direction="left-to-right" evidence="8">
        <dbReference type="Rhea" id="RHEA:46545"/>
    </physiologicalReaction>
</comment>
<comment type="catalytic activity">
    <reaction evidence="5">
        <text>all-trans-retinol = 11-cis-retinol</text>
        <dbReference type="Rhea" id="RHEA:19141"/>
        <dbReference type="ChEBI" id="CHEBI:16302"/>
        <dbReference type="ChEBI" id="CHEBI:17336"/>
    </reaction>
    <physiologicalReaction direction="left-to-right" evidence="9">
        <dbReference type="Rhea" id="RHEA:19142"/>
    </physiologicalReaction>
    <physiologicalReaction direction="right-to-left" evidence="2">
        <dbReference type="Rhea" id="RHEA:19143"/>
    </physiologicalReaction>
</comment>
<comment type="catalytic activity">
    <reaction evidence="2">
        <text>all-trans-retinol = 9-cis-retinol</text>
        <dbReference type="Rhea" id="RHEA:55348"/>
        <dbReference type="ChEBI" id="CHEBI:17336"/>
        <dbReference type="ChEBI" id="CHEBI:78272"/>
    </reaction>
    <physiologicalReaction direction="left-to-right" evidence="2">
        <dbReference type="Rhea" id="RHEA:55349"/>
    </physiologicalReaction>
</comment>
<comment type="catalytic activity">
    <reaction evidence="2">
        <text>all-trans-retinol = 13-cis-retinol</text>
        <dbReference type="Rhea" id="RHEA:55352"/>
        <dbReference type="ChEBI" id="CHEBI:17336"/>
        <dbReference type="ChEBI" id="CHEBI:45479"/>
    </reaction>
    <physiologicalReaction direction="left-to-right" evidence="2">
        <dbReference type="Rhea" id="RHEA:55353"/>
    </physiologicalReaction>
</comment>
<comment type="catalytic activity">
    <reaction evidence="2">
        <text>11-cis-retinol = 13-cis-retinol</text>
        <dbReference type="Rhea" id="RHEA:55356"/>
        <dbReference type="ChEBI" id="CHEBI:16302"/>
        <dbReference type="ChEBI" id="CHEBI:45479"/>
    </reaction>
    <physiologicalReaction direction="left-to-right" evidence="2">
        <dbReference type="Rhea" id="RHEA:55357"/>
    </physiologicalReaction>
</comment>
<comment type="catalytic activity">
    <reaction evidence="2">
        <text>11-cis-retinol = 9-cis-retinol</text>
        <dbReference type="Rhea" id="RHEA:55360"/>
        <dbReference type="ChEBI" id="CHEBI:16302"/>
        <dbReference type="ChEBI" id="CHEBI:78272"/>
    </reaction>
    <physiologicalReaction direction="left-to-right" evidence="2">
        <dbReference type="Rhea" id="RHEA:55361"/>
    </physiologicalReaction>
</comment>
<comment type="subunit">
    <text evidence="2">Interacts with RLBP1; the interaction increases synthesis of chromophore-precursors by DEGS1.</text>
</comment>
<comment type="subcellular location">
    <subcellularLocation>
        <location evidence="1">Mitochondrion membrane</location>
    </subcellularLocation>
    <subcellularLocation>
        <location evidence="1">Endoplasmic reticulum membrane</location>
        <topology evidence="1">Multi-pass membrane protein</topology>
    </subcellularLocation>
</comment>
<comment type="tissue specificity">
    <text evidence="5 6">Detected in testis. Detected in pachytene spermatocytes and round spermatids. Expressed in retina and retinal pigment epithelium by Mueller cells (at protein level) (PubMed:23143414).</text>
</comment>
<comment type="PTM">
    <text evidence="1">Myristoylation can target the enzyme to the mitochondria leading to an increase in ceramide levels.</text>
</comment>
<comment type="similarity">
    <text evidence="7">Belongs to the fatty acid desaturase type 1 family. DEGS subfamily.</text>
</comment>
<accession>O09005</accession>
<accession>Q8R4H3</accession>
<keyword id="KW-0256">Endoplasmic reticulum</keyword>
<keyword id="KW-0275">Fatty acid biosynthesis</keyword>
<keyword id="KW-0276">Fatty acid metabolism</keyword>
<keyword id="KW-0413">Isomerase</keyword>
<keyword id="KW-0444">Lipid biosynthesis</keyword>
<keyword id="KW-0443">Lipid metabolism</keyword>
<keyword id="KW-0449">Lipoprotein</keyword>
<keyword id="KW-0472">Membrane</keyword>
<keyword id="KW-0496">Mitochondrion</keyword>
<keyword id="KW-0519">Myristate</keyword>
<keyword id="KW-0560">Oxidoreductase</keyword>
<keyword id="KW-0597">Phosphoprotein</keyword>
<keyword id="KW-1185">Reference proteome</keyword>
<keyword id="KW-0812">Transmembrane</keyword>
<keyword id="KW-1133">Transmembrane helix</keyword>
<gene>
    <name evidence="10" type="primary">Degs1</name>
    <name type="synonym">Degs</name>
    <name type="synonym">Des1</name>
    <name type="synonym">Mdes</name>
</gene>
<organism>
    <name type="scientific">Mus musculus</name>
    <name type="common">Mouse</name>
    <dbReference type="NCBI Taxonomy" id="10090"/>
    <lineage>
        <taxon>Eukaryota</taxon>
        <taxon>Metazoa</taxon>
        <taxon>Chordata</taxon>
        <taxon>Craniata</taxon>
        <taxon>Vertebrata</taxon>
        <taxon>Euteleostomi</taxon>
        <taxon>Mammalia</taxon>
        <taxon>Eutheria</taxon>
        <taxon>Euarchontoglires</taxon>
        <taxon>Glires</taxon>
        <taxon>Rodentia</taxon>
        <taxon>Myomorpha</taxon>
        <taxon>Muroidea</taxon>
        <taxon>Muridae</taxon>
        <taxon>Murinae</taxon>
        <taxon>Mus</taxon>
        <taxon>Mus</taxon>
    </lineage>
</organism>
<name>DEGS1_MOUSE</name>
<evidence type="ECO:0000250" key="1">
    <source>
        <dbReference type="UniProtKB" id="O15121"/>
    </source>
</evidence>
<evidence type="ECO:0000250" key="2">
    <source>
        <dbReference type="UniProtKB" id="Q5F3C1"/>
    </source>
</evidence>
<evidence type="ECO:0000255" key="3"/>
<evidence type="ECO:0000269" key="4">
    <source>
    </source>
</evidence>
<evidence type="ECO:0000269" key="5">
    <source>
    </source>
</evidence>
<evidence type="ECO:0000269" key="6">
    <source>
    </source>
</evidence>
<evidence type="ECO:0000305" key="7"/>
<evidence type="ECO:0000305" key="8">
    <source>
    </source>
</evidence>
<evidence type="ECO:0000305" key="9">
    <source>
    </source>
</evidence>
<evidence type="ECO:0000312" key="10">
    <source>
        <dbReference type="MGI" id="MGI:1097711"/>
    </source>
</evidence>